<evidence type="ECO:0000256" key="1">
    <source>
        <dbReference type="SAM" id="MobiDB-lite"/>
    </source>
</evidence>
<evidence type="ECO:0000305" key="2"/>
<feature type="chain" id="PRO_0000157695" description="Large ribosomal subunit protein P1">
    <location>
        <begin position="1"/>
        <end position="103"/>
    </location>
</feature>
<feature type="region of interest" description="Disordered" evidence="1">
    <location>
        <begin position="66"/>
        <end position="103"/>
    </location>
</feature>
<feature type="compositionally biased region" description="Basic and acidic residues" evidence="1">
    <location>
        <begin position="80"/>
        <end position="90"/>
    </location>
</feature>
<feature type="compositionally biased region" description="Acidic residues" evidence="1">
    <location>
        <begin position="91"/>
        <end position="103"/>
    </location>
</feature>
<comment type="function">
    <text>Plays an important role in the elongation step of protein synthesis.</text>
</comment>
<comment type="subunit">
    <text>P1 and P2 exist as dimers at the large ribosomal subunit.</text>
</comment>
<comment type="similarity">
    <text evidence="2">Belongs to the eukaryotic ribosomal protein P1/P2 family.</text>
</comment>
<name>RLA1_POLPE</name>
<protein>
    <recommendedName>
        <fullName evidence="2">Large ribosomal subunit protein P1</fullName>
    </recommendedName>
    <alternativeName>
        <fullName>60S acidic ribosomal protein P1</fullName>
        <shortName>A1</shortName>
    </alternativeName>
</protein>
<keyword id="KW-0687">Ribonucleoprotein</keyword>
<keyword id="KW-0689">Ribosomal protein</keyword>
<reference key="1">
    <citation type="journal article" date="1991" name="Biochem. Cell Biol.">
        <title>Sequence of an acidic ribosomal protein from the jellyfish Polyorchis penicillatus.</title>
        <authorList>
            <person name="Gallin W.J."/>
        </authorList>
    </citation>
    <scope>NUCLEOTIDE SEQUENCE [MRNA]</scope>
</reference>
<proteinExistence type="inferred from homology"/>
<dbReference type="EMBL" id="M64678">
    <property type="protein sequence ID" value="AAA29791.1"/>
    <property type="molecule type" value="mRNA"/>
</dbReference>
<dbReference type="SMR" id="P27464"/>
<dbReference type="GO" id="GO:0022625">
    <property type="term" value="C:cytosolic large ribosomal subunit"/>
    <property type="evidence" value="ECO:0007669"/>
    <property type="project" value="TreeGrafter"/>
</dbReference>
<dbReference type="GO" id="GO:0030295">
    <property type="term" value="F:protein kinase activator activity"/>
    <property type="evidence" value="ECO:0007669"/>
    <property type="project" value="TreeGrafter"/>
</dbReference>
<dbReference type="GO" id="GO:0043021">
    <property type="term" value="F:ribonucleoprotein complex binding"/>
    <property type="evidence" value="ECO:0007669"/>
    <property type="project" value="TreeGrafter"/>
</dbReference>
<dbReference type="GO" id="GO:0003735">
    <property type="term" value="F:structural constituent of ribosome"/>
    <property type="evidence" value="ECO:0007669"/>
    <property type="project" value="InterPro"/>
</dbReference>
<dbReference type="GO" id="GO:0002181">
    <property type="term" value="P:cytoplasmic translation"/>
    <property type="evidence" value="ECO:0007669"/>
    <property type="project" value="TreeGrafter"/>
</dbReference>
<dbReference type="GO" id="GO:0006414">
    <property type="term" value="P:translational elongation"/>
    <property type="evidence" value="ECO:0007669"/>
    <property type="project" value="InterPro"/>
</dbReference>
<dbReference type="CDD" id="cd05831">
    <property type="entry name" value="Ribosomal_P1"/>
    <property type="match status" value="1"/>
</dbReference>
<dbReference type="FunFam" id="1.10.10.1410:FF:000001">
    <property type="entry name" value="60S acidic ribosomal protein P1"/>
    <property type="match status" value="1"/>
</dbReference>
<dbReference type="Gene3D" id="1.10.10.1410">
    <property type="match status" value="1"/>
</dbReference>
<dbReference type="HAMAP" id="MF_01478">
    <property type="entry name" value="Ribosomal_L12_arch"/>
    <property type="match status" value="1"/>
</dbReference>
<dbReference type="InterPro" id="IPR038716">
    <property type="entry name" value="P1/P2_N_sf"/>
</dbReference>
<dbReference type="InterPro" id="IPR027534">
    <property type="entry name" value="Ribosomal_P1/P2"/>
</dbReference>
<dbReference type="PANTHER" id="PTHR45696">
    <property type="entry name" value="60S ACIDIC RIBOSOMAL PROTEIN P1"/>
    <property type="match status" value="1"/>
</dbReference>
<dbReference type="PANTHER" id="PTHR45696:SF10">
    <property type="entry name" value="LARGE RIBOSOMAL SUBUNIT PROTEIN P1"/>
    <property type="match status" value="1"/>
</dbReference>
<dbReference type="Pfam" id="PF00428">
    <property type="entry name" value="Ribosomal_60s"/>
    <property type="match status" value="1"/>
</dbReference>
<organism>
    <name type="scientific">Polyorchis penicillatus</name>
    <name type="common">Hydromedusa</name>
    <dbReference type="NCBI Taxonomy" id="6091"/>
    <lineage>
        <taxon>Eukaryota</taxon>
        <taxon>Metazoa</taxon>
        <taxon>Cnidaria</taxon>
        <taxon>Hydrozoa</taxon>
        <taxon>Hydroidolina</taxon>
        <taxon>Anthoathecata</taxon>
        <taxon>Capitata</taxon>
        <taxon>Polyorchidae</taxon>
        <taxon>Polyorchis</taxon>
    </lineage>
</organism>
<sequence length="103" mass="10606">MADSSTSELACVYSALILHDDAITAEKMNKIISAANVNVEPYWPGLFALEGKNIGDLICNVGSSGPAAGAPAAGAAGGAVEEKKEEKKAESEDESDDDMGLFD</sequence>
<accession>P27464</accession>